<proteinExistence type="inferred from homology"/>
<gene>
    <name evidence="1" type="primary">nuoD</name>
    <name type="ordered locus">COXBURSA331_A1615</name>
</gene>
<dbReference type="EC" id="7.1.1.-" evidence="1"/>
<dbReference type="EMBL" id="CP000890">
    <property type="protein sequence ID" value="ABX79117.1"/>
    <property type="molecule type" value="Genomic_DNA"/>
</dbReference>
<dbReference type="SMR" id="A9N8X0"/>
<dbReference type="KEGG" id="cbs:COXBURSA331_A1615"/>
<dbReference type="HOGENOM" id="CLU_015134_1_1_6"/>
<dbReference type="GO" id="GO:0005886">
    <property type="term" value="C:plasma membrane"/>
    <property type="evidence" value="ECO:0007669"/>
    <property type="project" value="UniProtKB-SubCell"/>
</dbReference>
<dbReference type="GO" id="GO:0051287">
    <property type="term" value="F:NAD binding"/>
    <property type="evidence" value="ECO:0007669"/>
    <property type="project" value="InterPro"/>
</dbReference>
<dbReference type="GO" id="GO:0050136">
    <property type="term" value="F:NADH:ubiquinone reductase (non-electrogenic) activity"/>
    <property type="evidence" value="ECO:0007669"/>
    <property type="project" value="UniProtKB-UniRule"/>
</dbReference>
<dbReference type="GO" id="GO:0048038">
    <property type="term" value="F:quinone binding"/>
    <property type="evidence" value="ECO:0007669"/>
    <property type="project" value="UniProtKB-KW"/>
</dbReference>
<dbReference type="FunFam" id="1.10.645.10:FF:000005">
    <property type="entry name" value="NADH-quinone oxidoreductase subunit D"/>
    <property type="match status" value="1"/>
</dbReference>
<dbReference type="Gene3D" id="1.10.645.10">
    <property type="entry name" value="Cytochrome-c3 Hydrogenase, chain B"/>
    <property type="match status" value="1"/>
</dbReference>
<dbReference type="HAMAP" id="MF_01358">
    <property type="entry name" value="NDH1_NuoD"/>
    <property type="match status" value="1"/>
</dbReference>
<dbReference type="InterPro" id="IPR001135">
    <property type="entry name" value="NADH_Q_OxRdtase_suD"/>
</dbReference>
<dbReference type="InterPro" id="IPR014029">
    <property type="entry name" value="NADH_UbQ_OxRdtase_49kDa_CS"/>
</dbReference>
<dbReference type="InterPro" id="IPR022885">
    <property type="entry name" value="NDH1_su_D/H"/>
</dbReference>
<dbReference type="InterPro" id="IPR029014">
    <property type="entry name" value="NiFe-Hase_large"/>
</dbReference>
<dbReference type="NCBIfam" id="TIGR01962">
    <property type="entry name" value="NuoD"/>
    <property type="match status" value="1"/>
</dbReference>
<dbReference type="NCBIfam" id="NF004739">
    <property type="entry name" value="PRK06075.1"/>
    <property type="match status" value="1"/>
</dbReference>
<dbReference type="PANTHER" id="PTHR11993:SF10">
    <property type="entry name" value="NADH DEHYDROGENASE [UBIQUINONE] IRON-SULFUR PROTEIN 2, MITOCHONDRIAL"/>
    <property type="match status" value="1"/>
</dbReference>
<dbReference type="PANTHER" id="PTHR11993">
    <property type="entry name" value="NADH-UBIQUINONE OXIDOREDUCTASE 49 KDA SUBUNIT"/>
    <property type="match status" value="1"/>
</dbReference>
<dbReference type="Pfam" id="PF00346">
    <property type="entry name" value="Complex1_49kDa"/>
    <property type="match status" value="1"/>
</dbReference>
<dbReference type="SUPFAM" id="SSF56762">
    <property type="entry name" value="HydB/Nqo4-like"/>
    <property type="match status" value="1"/>
</dbReference>
<dbReference type="PROSITE" id="PS00535">
    <property type="entry name" value="COMPLEX1_49K"/>
    <property type="match status" value="1"/>
</dbReference>
<organism>
    <name type="scientific">Coxiella burnetii (strain RSA 331 / Henzerling II)</name>
    <dbReference type="NCBI Taxonomy" id="360115"/>
    <lineage>
        <taxon>Bacteria</taxon>
        <taxon>Pseudomonadati</taxon>
        <taxon>Pseudomonadota</taxon>
        <taxon>Gammaproteobacteria</taxon>
        <taxon>Legionellales</taxon>
        <taxon>Coxiellaceae</taxon>
        <taxon>Coxiella</taxon>
    </lineage>
</organism>
<sequence length="417" mass="48119">MAEVRNYTFNFGPQHPAAHGVLRLIVEVDGEVIQRIDPHIGLLHRATEKLAESKPYNQTIGYMDRLDYVSMMANEHGYVLAIEKLLGIEPPIRAKYIRTMFDEITRILNHLLWLGAHALDVGAMTVFLYCFREREDLMDCYEAVSGARMHATYYRPGGVYRDLPDSMPKYKPSRWHNEKAVKKMNEAREGSLLDFIWDFTARFPNLIDEYESLLTDNRIWKQRTVGIGVVSAERALQLGFTGPMLRASGVEWDLRKKQPYAAYDRVDFDIPIGREGDCYDRYLVRIEEMRQSNRIIRQCVEWLRKNPGSVMIDDYKIVPPQREVMKRDMEALIHHFKLFTEGYIVPEGEAYAAVEQPKGEFGVYIVSDGANKPYRVKVRAASYPHLAAMNEMCRGHMIADLVAIISSIDIVFGEIDR</sequence>
<accession>A9N8X0</accession>
<evidence type="ECO:0000255" key="1">
    <source>
        <dbReference type="HAMAP-Rule" id="MF_01358"/>
    </source>
</evidence>
<feature type="chain" id="PRO_0000371857" description="NADH-quinone oxidoreductase subunit D">
    <location>
        <begin position="1"/>
        <end position="417"/>
    </location>
</feature>
<keyword id="KW-0997">Cell inner membrane</keyword>
<keyword id="KW-1003">Cell membrane</keyword>
<keyword id="KW-0472">Membrane</keyword>
<keyword id="KW-0520">NAD</keyword>
<keyword id="KW-0874">Quinone</keyword>
<keyword id="KW-1278">Translocase</keyword>
<keyword id="KW-0813">Transport</keyword>
<keyword id="KW-0830">Ubiquinone</keyword>
<name>NUOD_COXBR</name>
<reference key="1">
    <citation type="submission" date="2007-11" db="EMBL/GenBank/DDBJ databases">
        <title>Genome sequencing of phylogenetically and phenotypically diverse Coxiella burnetii isolates.</title>
        <authorList>
            <person name="Seshadri R."/>
            <person name="Samuel J.E."/>
        </authorList>
    </citation>
    <scope>NUCLEOTIDE SEQUENCE [LARGE SCALE GENOMIC DNA]</scope>
    <source>
        <strain>RSA 331 / Henzerling II</strain>
    </source>
</reference>
<protein>
    <recommendedName>
        <fullName evidence="1">NADH-quinone oxidoreductase subunit D</fullName>
        <ecNumber evidence="1">7.1.1.-</ecNumber>
    </recommendedName>
    <alternativeName>
        <fullName evidence="1">NADH dehydrogenase I subunit D</fullName>
    </alternativeName>
    <alternativeName>
        <fullName evidence="1">NDH-1 subunit D</fullName>
    </alternativeName>
</protein>
<comment type="function">
    <text evidence="1">NDH-1 shuttles electrons from NADH, via FMN and iron-sulfur (Fe-S) centers, to quinones in the respiratory chain. The immediate electron acceptor for the enzyme in this species is believed to be ubiquinone. Couples the redox reaction to proton translocation (for every two electrons transferred, four hydrogen ions are translocated across the cytoplasmic membrane), and thus conserves the redox energy in a proton gradient.</text>
</comment>
<comment type="catalytic activity">
    <reaction evidence="1">
        <text>a quinone + NADH + 5 H(+)(in) = a quinol + NAD(+) + 4 H(+)(out)</text>
        <dbReference type="Rhea" id="RHEA:57888"/>
        <dbReference type="ChEBI" id="CHEBI:15378"/>
        <dbReference type="ChEBI" id="CHEBI:24646"/>
        <dbReference type="ChEBI" id="CHEBI:57540"/>
        <dbReference type="ChEBI" id="CHEBI:57945"/>
        <dbReference type="ChEBI" id="CHEBI:132124"/>
    </reaction>
</comment>
<comment type="subunit">
    <text evidence="1">NDH-1 is composed of 14 different subunits. Subunits NuoB, C, D, E, F, and G constitute the peripheral sector of the complex.</text>
</comment>
<comment type="subcellular location">
    <subcellularLocation>
        <location evidence="1">Cell inner membrane</location>
        <topology evidence="1">Peripheral membrane protein</topology>
        <orientation evidence="1">Cytoplasmic side</orientation>
    </subcellularLocation>
</comment>
<comment type="similarity">
    <text evidence="1">Belongs to the complex I 49 kDa subunit family.</text>
</comment>